<accession>Q14G55</accession>
<proteinExistence type="inferred from homology"/>
<keyword id="KW-0328">Glycosyltransferase</keyword>
<keyword id="KW-0441">Lipid A biosynthesis</keyword>
<keyword id="KW-0444">Lipid biosynthesis</keyword>
<keyword id="KW-0443">Lipid metabolism</keyword>
<keyword id="KW-0808">Transferase</keyword>
<dbReference type="EC" id="2.4.1.182" evidence="1"/>
<dbReference type="EMBL" id="AM286280">
    <property type="protein sequence ID" value="CAL09584.1"/>
    <property type="molecule type" value="Genomic_DNA"/>
</dbReference>
<dbReference type="RefSeq" id="WP_003014884.1">
    <property type="nucleotide sequence ID" value="NC_008245.1"/>
</dbReference>
<dbReference type="SMR" id="Q14G55"/>
<dbReference type="CAZy" id="GT19">
    <property type="family name" value="Glycosyltransferase Family 19"/>
</dbReference>
<dbReference type="KEGG" id="ftf:FTF1568c"/>
<dbReference type="HOGENOM" id="CLU_036577_3_0_6"/>
<dbReference type="UniPathway" id="UPA00973"/>
<dbReference type="GO" id="GO:0016020">
    <property type="term" value="C:membrane"/>
    <property type="evidence" value="ECO:0007669"/>
    <property type="project" value="GOC"/>
</dbReference>
<dbReference type="GO" id="GO:0008915">
    <property type="term" value="F:lipid-A-disaccharide synthase activity"/>
    <property type="evidence" value="ECO:0007669"/>
    <property type="project" value="UniProtKB-UniRule"/>
</dbReference>
<dbReference type="GO" id="GO:0005543">
    <property type="term" value="F:phospholipid binding"/>
    <property type="evidence" value="ECO:0007669"/>
    <property type="project" value="TreeGrafter"/>
</dbReference>
<dbReference type="GO" id="GO:0009245">
    <property type="term" value="P:lipid A biosynthetic process"/>
    <property type="evidence" value="ECO:0007669"/>
    <property type="project" value="UniProtKB-UniRule"/>
</dbReference>
<dbReference type="CDD" id="cd01635">
    <property type="entry name" value="Glycosyltransferase_GTB-type"/>
    <property type="match status" value="1"/>
</dbReference>
<dbReference type="Gene3D" id="3.40.50.2000">
    <property type="entry name" value="Glycogen Phosphorylase B"/>
    <property type="match status" value="2"/>
</dbReference>
<dbReference type="HAMAP" id="MF_00392">
    <property type="entry name" value="LpxB"/>
    <property type="match status" value="1"/>
</dbReference>
<dbReference type="InterPro" id="IPR003835">
    <property type="entry name" value="Glyco_trans_19"/>
</dbReference>
<dbReference type="NCBIfam" id="TIGR00215">
    <property type="entry name" value="lpxB"/>
    <property type="match status" value="1"/>
</dbReference>
<dbReference type="PANTHER" id="PTHR30372">
    <property type="entry name" value="LIPID-A-DISACCHARIDE SYNTHASE"/>
    <property type="match status" value="1"/>
</dbReference>
<dbReference type="PANTHER" id="PTHR30372:SF4">
    <property type="entry name" value="LIPID-A-DISACCHARIDE SYNTHASE, MITOCHONDRIAL-RELATED"/>
    <property type="match status" value="1"/>
</dbReference>
<dbReference type="Pfam" id="PF02684">
    <property type="entry name" value="LpxB"/>
    <property type="match status" value="1"/>
</dbReference>
<dbReference type="SUPFAM" id="SSF53756">
    <property type="entry name" value="UDP-Glycosyltransferase/glycogen phosphorylase"/>
    <property type="match status" value="1"/>
</dbReference>
<gene>
    <name evidence="1" type="primary">lpxB</name>
    <name type="ordered locus">FTF1568c</name>
</gene>
<name>LPXB_FRAT1</name>
<feature type="chain" id="PRO_1000049395" description="Lipid-A-disaccharide synthase">
    <location>
        <begin position="1"/>
        <end position="380"/>
    </location>
</feature>
<protein>
    <recommendedName>
        <fullName evidence="1">Lipid-A-disaccharide synthase</fullName>
        <ecNumber evidence="1">2.4.1.182</ecNumber>
    </recommendedName>
</protein>
<organism>
    <name type="scientific">Francisella tularensis subsp. tularensis (strain FSC 198)</name>
    <dbReference type="NCBI Taxonomy" id="393115"/>
    <lineage>
        <taxon>Bacteria</taxon>
        <taxon>Pseudomonadati</taxon>
        <taxon>Pseudomonadota</taxon>
        <taxon>Gammaproteobacteria</taxon>
        <taxon>Thiotrichales</taxon>
        <taxon>Francisellaceae</taxon>
        <taxon>Francisella</taxon>
    </lineage>
</organism>
<sequence length="380" mass="43088">MRIGIVAGELSGDQLGGTLVEALKQKYPNAIIEGIGGPKMAAAGFKSLYPMDALSLIGFLEIISKGLRILSIRRKIINYFKQNKPDIFIGIDAPDFNLTVEKELRSAGIKTIHYVSPKIWVWREYRIKKIRKATDKILAILPFETEYYKNRHKFEAIYVGHPLAKNIPIHIDRAKYRDKLGLKGSSLPILSVLPGSRTTEVSRLLPLFLLALQKLVDAGYKFKAIMPLAKPSLKPLFAKYKEQIDSLGIEVFETNSHDVLKASDLSLLASGTATLEAMLCKLPMVVGYKLSWLSALIGRMLIGNHSYWAFPNILHKNEIIKELIQEDCTVDNLFSELKRLFDDKRRNDYIVEEFEKIHKEMVIDTESKIIQVLDTMIEKS</sequence>
<comment type="function">
    <text evidence="1">Condensation of UDP-2,3-diacylglucosamine and 2,3-diacylglucosamine-1-phosphate to form lipid A disaccharide, a precursor of lipid A, a phosphorylated glycolipid that anchors the lipopolysaccharide to the outer membrane of the cell.</text>
</comment>
<comment type="catalytic activity">
    <reaction evidence="1">
        <text>a lipid X + a UDP-2-N,3-O-bis[(3R)-3-hydroxyacyl]-alpha-D-glucosamine = a lipid A disaccharide + UDP + H(+)</text>
        <dbReference type="Rhea" id="RHEA:67828"/>
        <dbReference type="ChEBI" id="CHEBI:15378"/>
        <dbReference type="ChEBI" id="CHEBI:58223"/>
        <dbReference type="ChEBI" id="CHEBI:137748"/>
        <dbReference type="ChEBI" id="CHEBI:176338"/>
        <dbReference type="ChEBI" id="CHEBI:176343"/>
        <dbReference type="EC" id="2.4.1.182"/>
    </reaction>
</comment>
<comment type="pathway">
    <text evidence="1">Bacterial outer membrane biogenesis; LPS lipid A biosynthesis.</text>
</comment>
<comment type="similarity">
    <text evidence="1">Belongs to the LpxB family.</text>
</comment>
<evidence type="ECO:0000255" key="1">
    <source>
        <dbReference type="HAMAP-Rule" id="MF_00392"/>
    </source>
</evidence>
<reference key="1">
    <citation type="journal article" date="2007" name="PLoS ONE">
        <title>Genome sequencing shows that European isolates of Francisella tularensis subspecies tularensis are almost identical to US laboratory strain Schu S4.</title>
        <authorList>
            <person name="Chaudhuri R.R."/>
            <person name="Ren C.-P."/>
            <person name="Desmond L."/>
            <person name="Vincent G.A."/>
            <person name="Silman N.J."/>
            <person name="Brehm J.K."/>
            <person name="Elmore M.J."/>
            <person name="Hudson M.J."/>
            <person name="Forsman M."/>
            <person name="Isherwood K.E."/>
            <person name="Gurycova D."/>
            <person name="Minton N.P."/>
            <person name="Titball R.W."/>
            <person name="Pallen M.J."/>
            <person name="Vipond R."/>
        </authorList>
    </citation>
    <scope>NUCLEOTIDE SEQUENCE [LARGE SCALE GENOMIC DNA]</scope>
    <source>
        <strain>FSC 198</strain>
    </source>
</reference>